<reference key="1">
    <citation type="journal article" date="1990" name="Mol. Microbiol.">
        <title>Spore colour in Streptomyces coelicolor A3(2) involves the developmentally regulated synthesis of a compound biosynthetically related to polyketide antibiotics.</title>
        <authorList>
            <person name="Davis N.K."/>
            <person name="Chater K.F."/>
            <person name="Bruton C.J."/>
        </authorList>
    </citation>
    <scope>NUCLEOTIDE SEQUENCE [GENOMIC DNA]</scope>
    <source>
        <strain>A3(2) / NRRL B-16638</strain>
    </source>
</reference>
<reference key="2">
    <citation type="journal article" date="2002" name="Nature">
        <title>Complete genome sequence of the model actinomycete Streptomyces coelicolor A3(2).</title>
        <authorList>
            <person name="Bentley S.D."/>
            <person name="Chater K.F."/>
            <person name="Cerdeno-Tarraga A.-M."/>
            <person name="Challis G.L."/>
            <person name="Thomson N.R."/>
            <person name="James K.D."/>
            <person name="Harris D.E."/>
            <person name="Quail M.A."/>
            <person name="Kieser H."/>
            <person name="Harper D."/>
            <person name="Bateman A."/>
            <person name="Brown S."/>
            <person name="Chandra G."/>
            <person name="Chen C.W."/>
            <person name="Collins M."/>
            <person name="Cronin A."/>
            <person name="Fraser A."/>
            <person name="Goble A."/>
            <person name="Hidalgo J."/>
            <person name="Hornsby T."/>
            <person name="Howarth S."/>
            <person name="Huang C.-H."/>
            <person name="Kieser T."/>
            <person name="Larke L."/>
            <person name="Murphy L.D."/>
            <person name="Oliver K."/>
            <person name="O'Neil S."/>
            <person name="Rabbinowitsch E."/>
            <person name="Rajandream M.A."/>
            <person name="Rutherford K.M."/>
            <person name="Rutter S."/>
            <person name="Seeger K."/>
            <person name="Saunders D."/>
            <person name="Sharp S."/>
            <person name="Squares R."/>
            <person name="Squares S."/>
            <person name="Taylor K."/>
            <person name="Warren T."/>
            <person name="Wietzorrek A."/>
            <person name="Woodward J.R."/>
            <person name="Barrell B.G."/>
            <person name="Parkhill J."/>
            <person name="Hopwood D.A."/>
        </authorList>
    </citation>
    <scope>NUCLEOTIDE SEQUENCE [LARGE SCALE GENOMIC DNA]</scope>
    <source>
        <strain>ATCC BAA-471 / A3(2) / M145</strain>
    </source>
</reference>
<accession>P23158</accession>
<name>WH42_STRCO</name>
<feature type="chain" id="PRO_0000065966" description="42.8 kDa protein in whiE locus">
    <location>
        <begin position="1"/>
        <end position="397"/>
    </location>
</feature>
<feature type="domain" description="ABM">
    <location>
        <begin position="46"/>
        <end position="137"/>
    </location>
</feature>
<feature type="region of interest" description="Disordered" evidence="1">
    <location>
        <begin position="1"/>
        <end position="22"/>
    </location>
</feature>
<feature type="compositionally biased region" description="Low complexity" evidence="1">
    <location>
        <begin position="8"/>
        <end position="22"/>
    </location>
</feature>
<dbReference type="EMBL" id="X55942">
    <property type="protein sequence ID" value="CAA39406.1"/>
    <property type="molecule type" value="Genomic_DNA"/>
</dbReference>
<dbReference type="EMBL" id="AL939123">
    <property type="protein sequence ID" value="CAB45604.1"/>
    <property type="molecule type" value="Genomic_DNA"/>
</dbReference>
<dbReference type="PIR" id="T35609">
    <property type="entry name" value="T35609"/>
</dbReference>
<dbReference type="RefSeq" id="NP_629462.1">
    <property type="nucleotide sequence ID" value="NC_003888.3"/>
</dbReference>
<dbReference type="RefSeq" id="WP_003973652.1">
    <property type="nucleotide sequence ID" value="NZ_VNID01000040.1"/>
</dbReference>
<dbReference type="SMR" id="P23158"/>
<dbReference type="STRING" id="100226.gene:17762970"/>
<dbReference type="PaxDb" id="100226-SCO5320"/>
<dbReference type="KEGG" id="sco:SCO5320"/>
<dbReference type="PATRIC" id="fig|100226.15.peg.5406"/>
<dbReference type="eggNOG" id="COG2329">
    <property type="taxonomic scope" value="Bacteria"/>
</dbReference>
<dbReference type="HOGENOM" id="CLU_703815_0_0_11"/>
<dbReference type="InParanoid" id="P23158"/>
<dbReference type="OrthoDB" id="3553699at2"/>
<dbReference type="Proteomes" id="UP000001973">
    <property type="component" value="Chromosome"/>
</dbReference>
<dbReference type="Gene3D" id="3.30.70.100">
    <property type="match status" value="1"/>
</dbReference>
<dbReference type="InterPro" id="IPR007138">
    <property type="entry name" value="ABM_dom"/>
</dbReference>
<dbReference type="InterPro" id="IPR011008">
    <property type="entry name" value="Dimeric_a/b-barrel"/>
</dbReference>
<dbReference type="InterPro" id="IPR007575">
    <property type="entry name" value="SchA_CurD-like"/>
</dbReference>
<dbReference type="Pfam" id="PF03992">
    <property type="entry name" value="ABM"/>
    <property type="match status" value="1"/>
</dbReference>
<dbReference type="Pfam" id="PF04486">
    <property type="entry name" value="SchA_CurD"/>
    <property type="match status" value="1"/>
</dbReference>
<dbReference type="SUPFAM" id="SSF54909">
    <property type="entry name" value="Dimeric alpha+beta barrel"/>
    <property type="match status" value="1"/>
</dbReference>
<dbReference type="PROSITE" id="PS51725">
    <property type="entry name" value="ABM"/>
    <property type="match status" value="1"/>
</dbReference>
<protein>
    <recommendedName>
        <fullName>42.8 kDa protein in whiE locus</fullName>
    </recommendedName>
    <alternativeName>
        <fullName>WhiE ORF I</fullName>
    </alternativeName>
</protein>
<proteinExistence type="inferred from homology"/>
<keyword id="KW-1185">Reference proteome</keyword>
<organism>
    <name type="scientific">Streptomyces coelicolor (strain ATCC BAA-471 / A3(2) / M145)</name>
    <dbReference type="NCBI Taxonomy" id="100226"/>
    <lineage>
        <taxon>Bacteria</taxon>
        <taxon>Bacillati</taxon>
        <taxon>Actinomycetota</taxon>
        <taxon>Actinomycetes</taxon>
        <taxon>Kitasatosporales</taxon>
        <taxon>Streptomycetaceae</taxon>
        <taxon>Streptomyces</taxon>
        <taxon>Streptomyces albidoflavus group</taxon>
    </lineage>
</organism>
<sequence length="397" mass="42841">MTVSPVVATDAPSTDATRTTATSATSPAVATDAGGVSISAFDGSRVRVVLMLDVHDGMQQEFLDAYERIRDRVAAVPGHVSDQLCQSLENPTQWLLTSEWESAAPFLAWVNSDEHLDTVEPLATCVRDTHSLRYSVLRETDGGRPAPGEPRSAPRIGDNVVRHALTFTVRPGTEAETARLLSEYVSPDAHVDGSTRLLRTSLFMSGNRIVRAVEVRGDLQTALRHVARQPGVRAVEEALNPYLEQDRDLGDPQSARRFFTRAAMPAVHHATYPDRSGARRERLALLYPVRDGAGPDLARLLARQDAAAARNPDGPVLAATVFHRDDLVVRLVDVDGDPEDAPAEVLGLHGRGAADAERLLDAAAVGVDGSPAEAATLSRLLRRIRMTPLTDRRSAGS</sequence>
<comment type="similarity">
    <text evidence="2">Belongs to the SchA/CurD family.</text>
</comment>
<evidence type="ECO:0000256" key="1">
    <source>
        <dbReference type="SAM" id="MobiDB-lite"/>
    </source>
</evidence>
<evidence type="ECO:0000305" key="2"/>
<gene>
    <name type="ordered locus">SCO5320</name>
    <name type="ORF">SC6G9.13</name>
</gene>